<accession>Q5XIK8</accession>
<comment type="function">
    <text evidence="1">Probable phosphatase.</text>
</comment>
<comment type="similarity">
    <text evidence="5">Belongs to the CTDSPL2 family.</text>
</comment>
<sequence>MKLRTRKASQQSSPIQTQRTARAKRKYSEVDDSLPSGGEKPSKNETGLLSSIKKFIKGSTPKEERENPSKRSRIERDIDNNLITSTPRTGEKPDKQLSRVRRKSPVNGEAGSYEMTNQHIKQNGKLEDNPCSGSPPRTTLLGTIFSPVFNFFSPANKNGTSGSDSPGQAVEAEEIVKQLDMEQVDEITTSTTSANGAAYSNQAVQVRPSLNNGLEEAEETVTRDIPPLTAPVAPESGYSSAHAEATYEEDWEVFDPYYFIKHVPPLTEEQLNRKPALPLKTRSTPEFSLVLDLDETLVHCSLNELEDAALTFPVLFQDVIYQVYVRLRPFFREFLERMSQMYEIILFTASKKVYADKLLNILDPKKQLVRHRLFREHCVCVQGNYIKDLNILGRDLSKTIIIDNSPQAFAYQLSNGIPIESWFMDKNDNELLKLIPFLEKLVELNEDVRPHIRDRFRLHDLLPPD</sequence>
<feature type="chain" id="PRO_0000331466" description="CTD small phosphatase-like protein 2">
    <location>
        <begin position="1"/>
        <end position="465"/>
    </location>
</feature>
<feature type="domain" description="FCP1 homology" evidence="3">
    <location>
        <begin position="282"/>
        <end position="441"/>
    </location>
</feature>
<feature type="region of interest" description="Disordered" evidence="4">
    <location>
        <begin position="1"/>
        <end position="133"/>
    </location>
</feature>
<feature type="compositionally biased region" description="Polar residues" evidence="4">
    <location>
        <begin position="8"/>
        <end position="20"/>
    </location>
</feature>
<feature type="compositionally biased region" description="Basic and acidic residues" evidence="4">
    <location>
        <begin position="60"/>
        <end position="79"/>
    </location>
</feature>
<feature type="modified residue" description="N6-acetyllysine" evidence="2">
    <location>
        <position position="26"/>
    </location>
</feature>
<feature type="modified residue" description="Phosphoserine" evidence="6">
    <location>
        <position position="28"/>
    </location>
</feature>
<feature type="modified residue" description="Phosphoserine" evidence="2">
    <location>
        <position position="51"/>
    </location>
</feature>
<feature type="modified residue" description="N6-acetyllysine" evidence="2">
    <location>
        <position position="57"/>
    </location>
</feature>
<feature type="modified residue" description="Phosphoserine" evidence="2">
    <location>
        <position position="85"/>
    </location>
</feature>
<feature type="modified residue" description="Phosphothreonine" evidence="2">
    <location>
        <position position="86"/>
    </location>
</feature>
<feature type="modified residue" description="Phosphoserine" evidence="2">
    <location>
        <position position="104"/>
    </location>
</feature>
<feature type="modified residue" description="Phosphoserine" evidence="2">
    <location>
        <position position="134"/>
    </location>
</feature>
<feature type="modified residue" description="Phosphoserine" evidence="2">
    <location>
        <position position="165"/>
    </location>
</feature>
<evidence type="ECO:0000250" key="1"/>
<evidence type="ECO:0000250" key="2">
    <source>
        <dbReference type="UniProtKB" id="Q05D32"/>
    </source>
</evidence>
<evidence type="ECO:0000255" key="3">
    <source>
        <dbReference type="PROSITE-ProRule" id="PRU00336"/>
    </source>
</evidence>
<evidence type="ECO:0000256" key="4">
    <source>
        <dbReference type="SAM" id="MobiDB-lite"/>
    </source>
</evidence>
<evidence type="ECO:0000305" key="5"/>
<evidence type="ECO:0007744" key="6">
    <source>
    </source>
</evidence>
<protein>
    <recommendedName>
        <fullName>CTD small phosphatase-like protein 2</fullName>
        <shortName>CTDSP-like 2</shortName>
        <ecNumber>3.1.3.-</ecNumber>
    </recommendedName>
</protein>
<dbReference type="EC" id="3.1.3.-"/>
<dbReference type="EMBL" id="BC083672">
    <property type="protein sequence ID" value="AAH83672.1"/>
    <property type="molecule type" value="mRNA"/>
</dbReference>
<dbReference type="RefSeq" id="NP_001014070.3">
    <property type="nucleotide sequence ID" value="NM_001014048.5"/>
</dbReference>
<dbReference type="RefSeq" id="NP_001396503.1">
    <property type="nucleotide sequence ID" value="NM_001409574.3"/>
</dbReference>
<dbReference type="SMR" id="Q5XIK8"/>
<dbReference type="FunCoup" id="Q5XIK8">
    <property type="interactions" value="3319"/>
</dbReference>
<dbReference type="STRING" id="10116.ENSRNOP00000033786"/>
<dbReference type="iPTMnet" id="Q5XIK8"/>
<dbReference type="PhosphoSitePlus" id="Q5XIK8"/>
<dbReference type="PaxDb" id="10116-ENSRNOP00000033786"/>
<dbReference type="GeneID" id="311368"/>
<dbReference type="KEGG" id="rno:311368"/>
<dbReference type="UCSC" id="RGD:1309219">
    <property type="organism name" value="rat"/>
</dbReference>
<dbReference type="AGR" id="RGD:1309219"/>
<dbReference type="CTD" id="51496"/>
<dbReference type="RGD" id="1309219">
    <property type="gene designation" value="Ctdspl2"/>
</dbReference>
<dbReference type="eggNOG" id="KOG1605">
    <property type="taxonomic scope" value="Eukaryota"/>
</dbReference>
<dbReference type="InParanoid" id="Q5XIK8"/>
<dbReference type="PhylomeDB" id="Q5XIK8"/>
<dbReference type="PRO" id="PR:Q5XIK8"/>
<dbReference type="Proteomes" id="UP000002494">
    <property type="component" value="Unplaced"/>
</dbReference>
<dbReference type="GO" id="GO:0005634">
    <property type="term" value="C:nucleus"/>
    <property type="evidence" value="ECO:0000266"/>
    <property type="project" value="RGD"/>
</dbReference>
<dbReference type="GO" id="GO:0004721">
    <property type="term" value="F:phosphoprotein phosphatase activity"/>
    <property type="evidence" value="ECO:0000266"/>
    <property type="project" value="RGD"/>
</dbReference>
<dbReference type="GO" id="GO:0008420">
    <property type="term" value="F:RNA polymerase II CTD heptapeptide repeat phosphatase activity"/>
    <property type="evidence" value="ECO:0000266"/>
    <property type="project" value="RGD"/>
</dbReference>
<dbReference type="GO" id="GO:0030514">
    <property type="term" value="P:negative regulation of BMP signaling pathway"/>
    <property type="evidence" value="ECO:0000266"/>
    <property type="project" value="RGD"/>
</dbReference>
<dbReference type="GO" id="GO:0046827">
    <property type="term" value="P:positive regulation of protein export from nucleus"/>
    <property type="evidence" value="ECO:0000266"/>
    <property type="project" value="RGD"/>
</dbReference>
<dbReference type="GO" id="GO:0006611">
    <property type="term" value="P:protein export from nucleus"/>
    <property type="evidence" value="ECO:0000266"/>
    <property type="project" value="RGD"/>
</dbReference>
<dbReference type="CDD" id="cd07521">
    <property type="entry name" value="HAD_FCP1-like"/>
    <property type="match status" value="1"/>
</dbReference>
<dbReference type="FunFam" id="3.40.50.1000:FF:000015">
    <property type="entry name" value="CTD small phosphatase-like protein 2"/>
    <property type="match status" value="1"/>
</dbReference>
<dbReference type="Gene3D" id="3.40.50.1000">
    <property type="entry name" value="HAD superfamily/HAD-like"/>
    <property type="match status" value="1"/>
</dbReference>
<dbReference type="InterPro" id="IPR011948">
    <property type="entry name" value="Dullard_phosphatase"/>
</dbReference>
<dbReference type="InterPro" id="IPR004274">
    <property type="entry name" value="FCP1_dom"/>
</dbReference>
<dbReference type="InterPro" id="IPR036412">
    <property type="entry name" value="HAD-like_sf"/>
</dbReference>
<dbReference type="InterPro" id="IPR023214">
    <property type="entry name" value="HAD_sf"/>
</dbReference>
<dbReference type="InterPro" id="IPR050365">
    <property type="entry name" value="TIM50"/>
</dbReference>
<dbReference type="NCBIfam" id="TIGR02251">
    <property type="entry name" value="HIF-SF_euk"/>
    <property type="match status" value="1"/>
</dbReference>
<dbReference type="PANTHER" id="PTHR12210">
    <property type="entry name" value="DULLARD PROTEIN PHOSPHATASE"/>
    <property type="match status" value="1"/>
</dbReference>
<dbReference type="Pfam" id="PF03031">
    <property type="entry name" value="NIF"/>
    <property type="match status" value="1"/>
</dbReference>
<dbReference type="SMART" id="SM00577">
    <property type="entry name" value="CPDc"/>
    <property type="match status" value="1"/>
</dbReference>
<dbReference type="SUPFAM" id="SSF56784">
    <property type="entry name" value="HAD-like"/>
    <property type="match status" value="1"/>
</dbReference>
<dbReference type="PROSITE" id="PS50969">
    <property type="entry name" value="FCP1"/>
    <property type="match status" value="1"/>
</dbReference>
<gene>
    <name type="primary">Ctdspl2</name>
</gene>
<proteinExistence type="evidence at protein level"/>
<keyword id="KW-0007">Acetylation</keyword>
<keyword id="KW-0378">Hydrolase</keyword>
<keyword id="KW-0597">Phosphoprotein</keyword>
<keyword id="KW-0904">Protein phosphatase</keyword>
<keyword id="KW-1185">Reference proteome</keyword>
<name>CTSL2_RAT</name>
<reference key="1">
    <citation type="journal article" date="2004" name="Genome Res.">
        <title>The status, quality, and expansion of the NIH full-length cDNA project: the Mammalian Gene Collection (MGC).</title>
        <authorList>
            <consortium name="The MGC Project Team"/>
        </authorList>
    </citation>
    <scope>NUCLEOTIDE SEQUENCE [LARGE SCALE MRNA]</scope>
    <source>
        <tissue>Testis</tissue>
    </source>
</reference>
<reference key="2">
    <citation type="journal article" date="2012" name="Nat. Commun.">
        <title>Quantitative maps of protein phosphorylation sites across 14 different rat organs and tissues.</title>
        <authorList>
            <person name="Lundby A."/>
            <person name="Secher A."/>
            <person name="Lage K."/>
            <person name="Nordsborg N.B."/>
            <person name="Dmytriyev A."/>
            <person name="Lundby C."/>
            <person name="Olsen J.V."/>
        </authorList>
    </citation>
    <scope>PHOSPHORYLATION [LARGE SCALE ANALYSIS] AT SER-28</scope>
    <scope>IDENTIFICATION BY MASS SPECTROMETRY [LARGE SCALE ANALYSIS]</scope>
</reference>
<organism>
    <name type="scientific">Rattus norvegicus</name>
    <name type="common">Rat</name>
    <dbReference type="NCBI Taxonomy" id="10116"/>
    <lineage>
        <taxon>Eukaryota</taxon>
        <taxon>Metazoa</taxon>
        <taxon>Chordata</taxon>
        <taxon>Craniata</taxon>
        <taxon>Vertebrata</taxon>
        <taxon>Euteleostomi</taxon>
        <taxon>Mammalia</taxon>
        <taxon>Eutheria</taxon>
        <taxon>Euarchontoglires</taxon>
        <taxon>Glires</taxon>
        <taxon>Rodentia</taxon>
        <taxon>Myomorpha</taxon>
        <taxon>Muroidea</taxon>
        <taxon>Muridae</taxon>
        <taxon>Murinae</taxon>
        <taxon>Rattus</taxon>
    </lineage>
</organism>